<comment type="subunit">
    <text evidence="1">Part of the 50S ribosomal subunit. Contacts protein L32.</text>
</comment>
<comment type="similarity">
    <text evidence="1">Belongs to the bacterial ribosomal protein bL17 family.</text>
</comment>
<proteinExistence type="inferred from homology"/>
<protein>
    <recommendedName>
        <fullName evidence="1">Large ribosomal subunit protein bL17</fullName>
    </recommendedName>
    <alternativeName>
        <fullName evidence="2">50S ribosomal protein L17</fullName>
    </alternativeName>
</protein>
<keyword id="KW-1185">Reference proteome</keyword>
<keyword id="KW-0687">Ribonucleoprotein</keyword>
<keyword id="KW-0689">Ribosomal protein</keyword>
<reference key="1">
    <citation type="journal article" date="2006" name="Nat. Biotechnol.">
        <title>Genome sequence of the ubiquitous hydrocarbon-degrading marine bacterium Alcanivorax borkumensis.</title>
        <authorList>
            <person name="Schneiker S."/>
            <person name="Martins dos Santos V.A.P."/>
            <person name="Bartels D."/>
            <person name="Bekel T."/>
            <person name="Brecht M."/>
            <person name="Buhrmester J."/>
            <person name="Chernikova T.N."/>
            <person name="Denaro R."/>
            <person name="Ferrer M."/>
            <person name="Gertler C."/>
            <person name="Goesmann A."/>
            <person name="Golyshina O.V."/>
            <person name="Kaminski F."/>
            <person name="Khachane A.N."/>
            <person name="Lang S."/>
            <person name="Linke B."/>
            <person name="McHardy A.C."/>
            <person name="Meyer F."/>
            <person name="Nechitaylo T."/>
            <person name="Puehler A."/>
            <person name="Regenhardt D."/>
            <person name="Rupp O."/>
            <person name="Sabirova J.S."/>
            <person name="Selbitschka W."/>
            <person name="Yakimov M.M."/>
            <person name="Timmis K.N."/>
            <person name="Vorhoelter F.-J."/>
            <person name="Weidner S."/>
            <person name="Kaiser O."/>
            <person name="Golyshin P.N."/>
        </authorList>
    </citation>
    <scope>NUCLEOTIDE SEQUENCE [LARGE SCALE GENOMIC DNA]</scope>
    <source>
        <strain>ATCC 700651 / DSM 11573 / NCIMB 13689 / SK2</strain>
    </source>
</reference>
<name>RL17_ALCBS</name>
<dbReference type="EMBL" id="AM286690">
    <property type="protein sequence ID" value="CAL15871.1"/>
    <property type="molecule type" value="Genomic_DNA"/>
</dbReference>
<dbReference type="RefSeq" id="WP_011587709.1">
    <property type="nucleotide sequence ID" value="NC_008260.1"/>
</dbReference>
<dbReference type="SMR" id="Q0VSH7"/>
<dbReference type="STRING" id="393595.ABO_0423"/>
<dbReference type="KEGG" id="abo:ABO_0423"/>
<dbReference type="eggNOG" id="COG0203">
    <property type="taxonomic scope" value="Bacteria"/>
</dbReference>
<dbReference type="HOGENOM" id="CLU_074407_2_0_6"/>
<dbReference type="OrthoDB" id="9809073at2"/>
<dbReference type="Proteomes" id="UP000008871">
    <property type="component" value="Chromosome"/>
</dbReference>
<dbReference type="GO" id="GO:0022625">
    <property type="term" value="C:cytosolic large ribosomal subunit"/>
    <property type="evidence" value="ECO:0007669"/>
    <property type="project" value="TreeGrafter"/>
</dbReference>
<dbReference type="GO" id="GO:0003735">
    <property type="term" value="F:structural constituent of ribosome"/>
    <property type="evidence" value="ECO:0007669"/>
    <property type="project" value="InterPro"/>
</dbReference>
<dbReference type="GO" id="GO:0006412">
    <property type="term" value="P:translation"/>
    <property type="evidence" value="ECO:0007669"/>
    <property type="project" value="UniProtKB-UniRule"/>
</dbReference>
<dbReference type="FunFam" id="3.90.1030.10:FF:000001">
    <property type="entry name" value="50S ribosomal protein L17"/>
    <property type="match status" value="1"/>
</dbReference>
<dbReference type="Gene3D" id="3.90.1030.10">
    <property type="entry name" value="Ribosomal protein L17"/>
    <property type="match status" value="1"/>
</dbReference>
<dbReference type="HAMAP" id="MF_01368">
    <property type="entry name" value="Ribosomal_bL17"/>
    <property type="match status" value="1"/>
</dbReference>
<dbReference type="InterPro" id="IPR000456">
    <property type="entry name" value="Ribosomal_bL17"/>
</dbReference>
<dbReference type="InterPro" id="IPR047859">
    <property type="entry name" value="Ribosomal_bL17_CS"/>
</dbReference>
<dbReference type="InterPro" id="IPR036373">
    <property type="entry name" value="Ribosomal_bL17_sf"/>
</dbReference>
<dbReference type="NCBIfam" id="TIGR00059">
    <property type="entry name" value="L17"/>
    <property type="match status" value="1"/>
</dbReference>
<dbReference type="PANTHER" id="PTHR14413:SF16">
    <property type="entry name" value="LARGE RIBOSOMAL SUBUNIT PROTEIN BL17M"/>
    <property type="match status" value="1"/>
</dbReference>
<dbReference type="PANTHER" id="PTHR14413">
    <property type="entry name" value="RIBOSOMAL PROTEIN L17"/>
    <property type="match status" value="1"/>
</dbReference>
<dbReference type="Pfam" id="PF01196">
    <property type="entry name" value="Ribosomal_L17"/>
    <property type="match status" value="1"/>
</dbReference>
<dbReference type="SUPFAM" id="SSF64263">
    <property type="entry name" value="Prokaryotic ribosomal protein L17"/>
    <property type="match status" value="1"/>
</dbReference>
<dbReference type="PROSITE" id="PS01167">
    <property type="entry name" value="RIBOSOMAL_L17"/>
    <property type="match status" value="1"/>
</dbReference>
<sequence>MRHRKSGRKLNRNSSHRQAMFRNMAVSLLEHEAIKTTLPKAKELRRVAEPLITLAKEDSVANRRLAFDRTRSKEMVGKLFNELGPRYQERPGGYIRILKMGFRAGDNAPMAYVELVDRPELVDADEE</sequence>
<organism>
    <name type="scientific">Alcanivorax borkumensis (strain ATCC 700651 / DSM 11573 / NCIMB 13689 / SK2)</name>
    <dbReference type="NCBI Taxonomy" id="393595"/>
    <lineage>
        <taxon>Bacteria</taxon>
        <taxon>Pseudomonadati</taxon>
        <taxon>Pseudomonadota</taxon>
        <taxon>Gammaproteobacteria</taxon>
        <taxon>Oceanospirillales</taxon>
        <taxon>Alcanivoracaceae</taxon>
        <taxon>Alcanivorax</taxon>
    </lineage>
</organism>
<gene>
    <name evidence="1" type="primary">rplQ</name>
    <name type="ordered locus">ABO_0423</name>
</gene>
<accession>Q0VSH7</accession>
<feature type="chain" id="PRO_0000267815" description="Large ribosomal subunit protein bL17">
    <location>
        <begin position="1"/>
        <end position="127"/>
    </location>
</feature>
<evidence type="ECO:0000255" key="1">
    <source>
        <dbReference type="HAMAP-Rule" id="MF_01368"/>
    </source>
</evidence>
<evidence type="ECO:0000305" key="2"/>